<proteinExistence type="evidence at protein level"/>
<organism>
    <name type="scientific">Tribolium castaneum</name>
    <name type="common">Red flour beetle</name>
    <dbReference type="NCBI Taxonomy" id="7070"/>
    <lineage>
        <taxon>Eukaryota</taxon>
        <taxon>Metazoa</taxon>
        <taxon>Ecdysozoa</taxon>
        <taxon>Arthropoda</taxon>
        <taxon>Hexapoda</taxon>
        <taxon>Insecta</taxon>
        <taxon>Pterygota</taxon>
        <taxon>Neoptera</taxon>
        <taxon>Endopterygota</taxon>
        <taxon>Coleoptera</taxon>
        <taxon>Polyphaga</taxon>
        <taxon>Cucujiformia</taxon>
        <taxon>Tenebrionidae</taxon>
        <taxon>Tenebrionidae incertae sedis</taxon>
        <taxon>Tribolium</taxon>
    </lineage>
</organism>
<evidence type="ECO:0000250" key="1">
    <source>
        <dbReference type="UniProtKB" id="Q8NE86"/>
    </source>
</evidence>
<evidence type="ECO:0000255" key="2"/>
<evidence type="ECO:0000256" key="3">
    <source>
        <dbReference type="SAM" id="MobiDB-lite"/>
    </source>
</evidence>
<evidence type="ECO:0000269" key="4">
    <source>
    </source>
</evidence>
<evidence type="ECO:0000269" key="5">
    <source>
    </source>
</evidence>
<evidence type="ECO:0000303" key="6">
    <source>
    </source>
</evidence>
<evidence type="ECO:0000303" key="7">
    <source>
    </source>
</evidence>
<evidence type="ECO:0000305" key="8"/>
<evidence type="ECO:0000305" key="9">
    <source>
    </source>
</evidence>
<evidence type="ECO:0000312" key="10">
    <source>
        <dbReference type="EMBL" id="EFA03728.2"/>
    </source>
</evidence>
<evidence type="ECO:0007744" key="11">
    <source>
        <dbReference type="PDB" id="6X4S"/>
    </source>
</evidence>
<evidence type="ECO:0007744" key="12">
    <source>
        <dbReference type="PDB" id="6XQN"/>
    </source>
</evidence>
<evidence type="ECO:0007829" key="13">
    <source>
        <dbReference type="PDB" id="6XQN"/>
    </source>
</evidence>
<gene>
    <name evidence="6" type="primary">MCU</name>
    <name evidence="10" type="ORF">TcasGA2_TC013837</name>
</gene>
<name>MCU_TRICA</name>
<comment type="function">
    <text evidence="1 4 5">Channel-forming and calcium-conducting subunit of the mitochondrial inner membrane calcium uniporter complex (uniplex), which mediates calcium uptake into the mitochondrial matrix (PubMed:32667285, PubMed:32841658). MCU channel activity is regulated by the calcium-sensor subunits of the uniplex MICU1 and MICU2 (PubMed:32667285). Mitochondrial calcium homeostasis plays key roles in cellular physiology and regulates ATP production, cytoplasmic calcium signals and activation of cell death pathways (By similarity).</text>
</comment>
<comment type="catalytic activity">
    <reaction evidence="4 5">
        <text>Ca(2+)(in) = Ca(2+)(out)</text>
        <dbReference type="Rhea" id="RHEA:29671"/>
        <dbReference type="ChEBI" id="CHEBI:29108"/>
    </reaction>
</comment>
<comment type="activity regulation">
    <text evidence="4">MCU channel activity is regulated by the heterodimer composed of MICU1 and MICU2, which act as calcium-sensors (PubMed:32667285). At low calcium levels, MICU1 occludes the pore of the MCU channel, preventing mitochondrial calcium uptake (PubMed:32667285). At higher calcium levels, calcium-binding to MICU1 and MICU2 induces a conformational change that weakens MCU-MICU1 interactions and moves the MICU1-MICU2 heterodimer away from the pore, allowing calcium permeation through the channel (PubMed:32667285).</text>
</comment>
<comment type="subunit">
    <text evidence="4 5">Homotetramer (PubMed:32667285, PubMed:32841658). Component of the uniplex complex, composed of MCU, EMRE, MICU1 and MICU2 in a 4:4:1:1 stoichiometry (PubMed:32667285, PubMed:32841658).</text>
</comment>
<comment type="subcellular location">
    <subcellularLocation>
        <location evidence="1">Mitochondrion inner membrane</location>
        <topology evidence="4 5">Multi-pass membrane protein</topology>
    </subcellularLocation>
</comment>
<comment type="domain">
    <text evidence="4">The selectivity filter, in which calcium ions are arranged in single file, is composed of two acidic rings separated by one helical turn along the central axis of the channel pore.</text>
</comment>
<comment type="similarity">
    <text evidence="8">Belongs to the MCU (TC 1.A.77) family.</text>
</comment>
<comment type="sequence caution" evidence="8">
    <conflict type="erroneous gene model prediction">
        <sequence resource="EMBL-CDS" id="EFA03728"/>
    </conflict>
</comment>
<accession>D6WIX5</accession>
<dbReference type="EMBL" id="KQ971342">
    <property type="protein sequence ID" value="EFA03728.2"/>
    <property type="status" value="ALT_SEQ"/>
    <property type="molecule type" value="Genomic_DNA"/>
</dbReference>
<dbReference type="RefSeq" id="XP_008192975.1">
    <property type="nucleotide sequence ID" value="XM_008194753.3"/>
</dbReference>
<dbReference type="PDB" id="6X4S">
    <property type="method" value="EM"/>
    <property type="resolution" value="3.50 A"/>
    <property type="chains" value="A/B/C/D/E/F/G/H=172-354"/>
</dbReference>
<dbReference type="PDB" id="6XQN">
    <property type="method" value="EM"/>
    <property type="resolution" value="3.30 A"/>
    <property type="chains" value="A/B/C/D=172-354"/>
</dbReference>
<dbReference type="PDBsum" id="6X4S"/>
<dbReference type="PDBsum" id="6XQN"/>
<dbReference type="EMDB" id="EMD-22290"/>
<dbReference type="SMR" id="D6WIX5"/>
<dbReference type="FunCoup" id="D6WIX5">
    <property type="interactions" value="870"/>
</dbReference>
<dbReference type="STRING" id="7070.D6WIX5"/>
<dbReference type="TCDB" id="1.A.77.1.17">
    <property type="family name" value="the mg(2+)/ca(2+) uniporter (mcu) family"/>
</dbReference>
<dbReference type="EnsemblMetazoa" id="TC013837_001">
    <property type="protein sequence ID" value="TC013837_001"/>
    <property type="gene ID" value="TC013837"/>
</dbReference>
<dbReference type="GeneID" id="660595"/>
<dbReference type="KEGG" id="tca:660595"/>
<dbReference type="CTD" id="90550"/>
<dbReference type="eggNOG" id="KOG2966">
    <property type="taxonomic scope" value="Eukaryota"/>
</dbReference>
<dbReference type="HOGENOM" id="CLU_056554_0_1_1"/>
<dbReference type="InParanoid" id="D6WIX5"/>
<dbReference type="OMA" id="DDIYVEY"/>
<dbReference type="Proteomes" id="UP000007266">
    <property type="component" value="Linkage group 5"/>
</dbReference>
<dbReference type="GO" id="GO:1990246">
    <property type="term" value="C:uniplex complex"/>
    <property type="evidence" value="ECO:0000314"/>
    <property type="project" value="UniProtKB"/>
</dbReference>
<dbReference type="GO" id="GO:0005262">
    <property type="term" value="F:calcium channel activity"/>
    <property type="evidence" value="ECO:0000314"/>
    <property type="project" value="UniProtKB"/>
</dbReference>
<dbReference type="GO" id="GO:0046872">
    <property type="term" value="F:metal ion binding"/>
    <property type="evidence" value="ECO:0007669"/>
    <property type="project" value="UniProtKB-KW"/>
</dbReference>
<dbReference type="GO" id="GO:0015292">
    <property type="term" value="F:uniporter activity"/>
    <property type="evidence" value="ECO:0000318"/>
    <property type="project" value="GO_Central"/>
</dbReference>
<dbReference type="GO" id="GO:0036444">
    <property type="term" value="P:calcium import into the mitochondrion"/>
    <property type="evidence" value="ECO:0000314"/>
    <property type="project" value="UniProtKB"/>
</dbReference>
<dbReference type="GO" id="GO:0051560">
    <property type="term" value="P:mitochondrial calcium ion homeostasis"/>
    <property type="evidence" value="ECO:0000318"/>
    <property type="project" value="GO_Central"/>
</dbReference>
<dbReference type="InterPro" id="IPR006769">
    <property type="entry name" value="MCU_C"/>
</dbReference>
<dbReference type="InterPro" id="IPR039055">
    <property type="entry name" value="MCU_fam"/>
</dbReference>
<dbReference type="PANTHER" id="PTHR13462">
    <property type="entry name" value="CALCIUM UNIPORTER PROTEIN, MITOCHONDRIAL"/>
    <property type="match status" value="1"/>
</dbReference>
<dbReference type="PANTHER" id="PTHR13462:SF10">
    <property type="entry name" value="CALCIUM UNIPORTER PROTEIN, MITOCHONDRIAL"/>
    <property type="match status" value="1"/>
</dbReference>
<dbReference type="Pfam" id="PF04678">
    <property type="entry name" value="MCU"/>
    <property type="match status" value="1"/>
</dbReference>
<feature type="transit peptide" description="Mitochondrion" evidence="2">
    <location>
        <begin position="1"/>
        <end position="12"/>
    </location>
</feature>
<feature type="chain" id="PRO_0000460492" description="Calcium uniporter protein, mitochondrial" evidence="2">
    <location>
        <begin position="13"/>
        <end position="367"/>
    </location>
</feature>
<feature type="topological domain" description="Mitochondrial matrix" evidence="9">
    <location>
        <begin position="13"/>
        <end position="232"/>
    </location>
</feature>
<feature type="transmembrane region" description="Helical" evidence="4 12">
    <location>
        <begin position="233"/>
        <end position="253"/>
    </location>
</feature>
<feature type="topological domain" description="Mitochondrial intermembrane" evidence="8">
    <location>
        <begin position="254"/>
        <end position="262"/>
    </location>
</feature>
<feature type="transmembrane region" description="Helical" evidence="4 12">
    <location>
        <begin position="263"/>
        <end position="284"/>
    </location>
</feature>
<feature type="topological domain" description="Mitochondrial matrix" evidence="9">
    <location>
        <begin position="285"/>
        <end position="367"/>
    </location>
</feature>
<feature type="region of interest" description="Disordered" evidence="3">
    <location>
        <begin position="61"/>
        <end position="80"/>
    </location>
</feature>
<feature type="coiled-coil region" evidence="2">
    <location>
        <begin position="199"/>
        <end position="233"/>
    </location>
</feature>
<feature type="short sequence motif" description="Selectivity filter" evidence="4">
    <location>
        <begin position="266"/>
        <end position="276"/>
    </location>
</feature>
<feature type="binding site" evidence="4 5 11 12">
    <location>
        <position position="270"/>
    </location>
    <ligand>
        <name>Ca(2+)</name>
        <dbReference type="ChEBI" id="CHEBI:29108"/>
    </ligand>
</feature>
<feature type="helix" evidence="13">
    <location>
        <begin position="185"/>
        <end position="195"/>
    </location>
</feature>
<feature type="helix" evidence="13">
    <location>
        <begin position="201"/>
        <end position="259"/>
    </location>
</feature>
<feature type="turn" evidence="13">
    <location>
        <begin position="260"/>
        <end position="263"/>
    </location>
</feature>
<feature type="turn" evidence="13">
    <location>
        <begin position="266"/>
        <end position="269"/>
    </location>
</feature>
<feature type="helix" evidence="13">
    <location>
        <begin position="270"/>
        <end position="291"/>
    </location>
</feature>
<feature type="helix" evidence="13">
    <location>
        <begin position="293"/>
        <end position="297"/>
    </location>
</feature>
<feature type="helix" evidence="13">
    <location>
        <begin position="299"/>
        <end position="313"/>
    </location>
</feature>
<feature type="helix" evidence="13">
    <location>
        <begin position="320"/>
        <end position="341"/>
    </location>
</feature>
<keyword id="KW-0002">3D-structure</keyword>
<keyword id="KW-0106">Calcium</keyword>
<keyword id="KW-0107">Calcium channel</keyword>
<keyword id="KW-0109">Calcium transport</keyword>
<keyword id="KW-0175">Coiled coil</keyword>
<keyword id="KW-0407">Ion channel</keyword>
<keyword id="KW-0406">Ion transport</keyword>
<keyword id="KW-0472">Membrane</keyword>
<keyword id="KW-0479">Metal-binding</keyword>
<keyword id="KW-0496">Mitochondrion</keyword>
<keyword id="KW-0999">Mitochondrion inner membrane</keyword>
<keyword id="KW-1185">Reference proteome</keyword>
<keyword id="KW-0809">Transit peptide</keyword>
<keyword id="KW-0812">Transmembrane</keyword>
<keyword id="KW-1133">Transmembrane helix</keyword>
<keyword id="KW-0813">Transport</keyword>
<sequence>MAMPRVLCRVRLLIHNDFSVISKYSPVVNSVLINKCARFRHSIRHFRTNFPAGLVLNTSQKQDASSSSSDSDSSDSDEDDVTIEYHRGLPQITVPLPSRKERCRFTLKPISNTVGDFLEMLKKEDRGIDRVVCKTIDGTRIASSTTIETLLQDDFKLLINDNAYNVDSPKQERLTTEEVQGLSDVKTLVNQLYEALNVREHQLQKEVELTTQLETLQQELLPLEEKKLELEQVANRRSNWMAWAGLGLMSVQFGILARLTWWEYSWDIMEPVTYFVTYGTAMAAYAYFVLTREEYILNDVRDRQQLLLLHKKAKKTGFDVNQYNVLKDQIAKLELDLKRLRDPLKLRLPPKAAAKEEKKQVEEKAKE</sequence>
<reference key="1">
    <citation type="journal article" date="2008" name="Nature">
        <title>The genome of the model beetle and pest Tribolium castaneum.</title>
        <authorList>
            <consortium name="Tribolium Genome Sequencing Consortium"/>
            <person name="Richards S."/>
            <person name="Gibbs R.A."/>
            <person name="Weinstock G.M."/>
            <person name="Brown S.J."/>
            <person name="Denell R."/>
            <person name="Beeman R.W."/>
            <person name="Gibbs R."/>
            <person name="Beeman R.W."/>
            <person name="Brown S.J."/>
            <person name="Bucher G."/>
            <person name="Friedrich M."/>
            <person name="Grimmelikhuijzen C.J."/>
            <person name="Klingler M."/>
            <person name="Lorenzen M."/>
            <person name="Richards S."/>
            <person name="Roth S."/>
            <person name="Schroder R."/>
            <person name="Tautz D."/>
            <person name="Zdobnov E.M."/>
            <person name="Muzny D."/>
            <person name="Gibbs R.A."/>
            <person name="Weinstock G.M."/>
            <person name="Attaway T."/>
            <person name="Bell S."/>
            <person name="Buhay C.J."/>
            <person name="Chandrabose M.N."/>
            <person name="Chavez D."/>
            <person name="Clerk-Blankenburg K.P."/>
            <person name="Cree A."/>
            <person name="Dao M."/>
            <person name="Davis C."/>
            <person name="Chacko J."/>
            <person name="Dinh H."/>
            <person name="Dugan-Rocha S."/>
            <person name="Fowler G."/>
            <person name="Garner T.T."/>
            <person name="Garnes J."/>
            <person name="Gnirke A."/>
            <person name="Hawes A."/>
            <person name="Hernandez J."/>
            <person name="Hines S."/>
            <person name="Holder M."/>
            <person name="Hume J."/>
            <person name="Jhangiani S.N."/>
            <person name="Joshi V."/>
            <person name="Khan Z.M."/>
            <person name="Jackson L."/>
            <person name="Kovar C."/>
            <person name="Kowis A."/>
            <person name="Lee S."/>
            <person name="Lewis L.R."/>
            <person name="Margolis J."/>
            <person name="Morgan M."/>
            <person name="Nazareth L.V."/>
            <person name="Nguyen N."/>
            <person name="Okwuonu G."/>
            <person name="Parker D."/>
            <person name="Richards S."/>
            <person name="Ruiz S.J."/>
            <person name="Santibanez J."/>
            <person name="Savard J."/>
            <person name="Scherer S.E."/>
            <person name="Schneider B."/>
            <person name="Sodergren E."/>
            <person name="Tautz D."/>
            <person name="Vattahil S."/>
            <person name="Villasana D."/>
            <person name="White C.S."/>
            <person name="Wright R."/>
            <person name="Park Y."/>
            <person name="Beeman R.W."/>
            <person name="Lord J."/>
            <person name="Oppert B."/>
            <person name="Lorenzen M."/>
            <person name="Brown S."/>
            <person name="Wang L."/>
            <person name="Savard J."/>
            <person name="Tautz D."/>
            <person name="Richards S."/>
            <person name="Weinstock G."/>
            <person name="Gibbs R.A."/>
            <person name="Liu Y."/>
            <person name="Worley K."/>
            <person name="Weinstock G."/>
            <person name="Elsik C.G."/>
            <person name="Reese J.T."/>
            <person name="Elhaik E."/>
            <person name="Landan G."/>
            <person name="Graur D."/>
            <person name="Arensburger P."/>
            <person name="Atkinson P."/>
            <person name="Beeman R.W."/>
            <person name="Beidler J."/>
            <person name="Brown S.J."/>
            <person name="Demuth J.P."/>
            <person name="Drury D.W."/>
            <person name="Du Y.Z."/>
            <person name="Fujiwara H."/>
            <person name="Lorenzen M."/>
            <person name="Maselli V."/>
            <person name="Osanai M."/>
            <person name="Park Y."/>
            <person name="Robertson H.M."/>
            <person name="Tu Z."/>
            <person name="Wang J.J."/>
            <person name="Wang S."/>
            <person name="Richards S."/>
            <person name="Song H."/>
            <person name="Zhang L."/>
            <person name="Sodergren E."/>
            <person name="Werner D."/>
            <person name="Stanke M."/>
            <person name="Morgenstern B."/>
            <person name="Solovyev V."/>
            <person name="Kosarev P."/>
            <person name="Brown G."/>
            <person name="Chen H.C."/>
            <person name="Ermolaeva O."/>
            <person name="Hlavina W."/>
            <person name="Kapustin Y."/>
            <person name="Kiryutin B."/>
            <person name="Kitts P."/>
            <person name="Maglott D."/>
            <person name="Pruitt K."/>
            <person name="Sapojnikov V."/>
            <person name="Souvorov A."/>
            <person name="Mackey A.J."/>
            <person name="Waterhouse R.M."/>
            <person name="Wyder S."/>
            <person name="Zdobnov E.M."/>
            <person name="Zdobnov E.M."/>
            <person name="Wyder S."/>
            <person name="Kriventseva E.V."/>
            <person name="Kadowaki T."/>
            <person name="Bork P."/>
            <person name="Aranda M."/>
            <person name="Bao R."/>
            <person name="Beermann A."/>
            <person name="Berns N."/>
            <person name="Bolognesi R."/>
            <person name="Bonneton F."/>
            <person name="Bopp D."/>
            <person name="Brown S.J."/>
            <person name="Bucher G."/>
            <person name="Butts T."/>
            <person name="Chaumot A."/>
            <person name="Denell R.E."/>
            <person name="Ferrier D.E."/>
            <person name="Friedrich M."/>
            <person name="Gordon C.M."/>
            <person name="Jindra M."/>
            <person name="Klingler M."/>
            <person name="Lan Q."/>
            <person name="Lattorff H.M."/>
            <person name="Laudet V."/>
            <person name="von Levetsow C."/>
            <person name="Liu Z."/>
            <person name="Lutz R."/>
            <person name="Lynch J.A."/>
            <person name="da Fonseca R.N."/>
            <person name="Posnien N."/>
            <person name="Reuter R."/>
            <person name="Roth S."/>
            <person name="Savard J."/>
            <person name="Schinko J.B."/>
            <person name="Schmitt C."/>
            <person name="Schoppmeier M."/>
            <person name="Schroder R."/>
            <person name="Shippy T.D."/>
            <person name="Simonnet F."/>
            <person name="Marques-Souza H."/>
            <person name="Tautz D."/>
            <person name="Tomoyasu Y."/>
            <person name="Trauner J."/>
            <person name="Van der Zee M."/>
            <person name="Vervoort M."/>
            <person name="Wittkopp N."/>
            <person name="Wimmer E.A."/>
            <person name="Yang X."/>
            <person name="Jones A.K."/>
            <person name="Sattelle D.B."/>
            <person name="Ebert P.R."/>
            <person name="Nelson D."/>
            <person name="Scott J.G."/>
            <person name="Beeman R.W."/>
            <person name="Muthukrishnan S."/>
            <person name="Kramer K.J."/>
            <person name="Arakane Y."/>
            <person name="Beeman R.W."/>
            <person name="Zhu Q."/>
            <person name="Hogenkamp D."/>
            <person name="Dixit R."/>
            <person name="Oppert B."/>
            <person name="Jiang H."/>
            <person name="Zou Z."/>
            <person name="Marshall J."/>
            <person name="Elpidina E."/>
            <person name="Vinokurov K."/>
            <person name="Oppert C."/>
            <person name="Zou Z."/>
            <person name="Evans J."/>
            <person name="Lu Z."/>
            <person name="Zhao P."/>
            <person name="Sumathipala N."/>
            <person name="Altincicek B."/>
            <person name="Vilcinskas A."/>
            <person name="Williams M."/>
            <person name="Hultmark D."/>
            <person name="Hetru C."/>
            <person name="Jiang H."/>
            <person name="Grimmelikhuijzen C.J."/>
            <person name="Hauser F."/>
            <person name="Cazzamali G."/>
            <person name="Williamson M."/>
            <person name="Park Y."/>
            <person name="Li B."/>
            <person name="Tanaka Y."/>
            <person name="Predel R."/>
            <person name="Neupert S."/>
            <person name="Schachtner J."/>
            <person name="Verleyen P."/>
            <person name="Raible F."/>
            <person name="Bork P."/>
            <person name="Friedrich M."/>
            <person name="Walden K.K."/>
            <person name="Robertson H.M."/>
            <person name="Angeli S."/>
            <person name="Foret S."/>
            <person name="Bucher G."/>
            <person name="Schuetz S."/>
            <person name="Maleszka R."/>
            <person name="Wimmer E.A."/>
            <person name="Beeman R.W."/>
            <person name="Lorenzen M."/>
            <person name="Tomoyasu Y."/>
            <person name="Miller S.C."/>
            <person name="Grossmann D."/>
            <person name="Bucher G."/>
        </authorList>
    </citation>
    <scope>NUCLEOTIDE SEQUENCE [LARGE SCALE GENOMIC DNA]</scope>
    <source>
        <strain>Georgia GA2</strain>
    </source>
</reference>
<reference key="2">
    <citation type="journal article" date="2010" name="Nucleic Acids Res.">
        <title>BeetleBase in 2010: revisions to provide comprehensive genomic information for Tribolium castaneum.</title>
        <authorList>
            <person name="Kim H.S."/>
            <person name="Murphy T."/>
            <person name="Xia J."/>
            <person name="Caragea D."/>
            <person name="Park Y."/>
            <person name="Beeman R.W."/>
            <person name="Lorenzen M.D."/>
            <person name="Butcher S."/>
            <person name="Manak J.R."/>
            <person name="Brown S.J."/>
        </authorList>
    </citation>
    <scope>GENOME REANNOTATION</scope>
    <source>
        <strain>Georgia GA2</strain>
    </source>
</reference>
<reference evidence="12" key="3">
    <citation type="journal article" date="2020" name="Elife">
        <title>Structures reveal gatekeeping of the mitochondrial Ca2+ uniporter by MICU1-MICU2.</title>
        <authorList>
            <person name="Wang C."/>
            <person name="Jacewicz A."/>
            <person name="Delgado B.D."/>
            <person name="Baradaran R."/>
            <person name="Long S.B."/>
        </authorList>
    </citation>
    <scope>STRUCTURE BY ELECTRON MICROSCOPY (3.30 ANGSTROMS) OF 172-354 OF THE UNIPLEX COMPLEX</scope>
    <scope>FUNCTION</scope>
    <scope>TRANSPORTER ACTIVITY</scope>
    <scope>ACTIVITY REGULATION</scope>
    <scope>DOMAIN</scope>
</reference>
<reference evidence="11" key="4">
    <citation type="journal article" date="2020" name="J. Mol. Biol.">
        <title>Structure and reconstitution of an MCU-EMRE mitochondrial Ca2+ uniporter complex.</title>
        <authorList>
            <person name="Wang C."/>
            <person name="Baradaran R."/>
            <person name="Long S.B."/>
        </authorList>
    </citation>
    <scope>STRUCTURE BY ELECTRON MICROSCOPY (3.50 ANGSTROMS) OF 172-354 IN COMPLEX WITH EMRE</scope>
    <scope>FUNCTION</scope>
    <scope>TRANSPORTER ACTIVITY</scope>
    <scope>INTERACTION WITH EMRE</scope>
</reference>
<protein>
    <recommendedName>
        <fullName evidence="8">Calcium uniporter protein, mitochondrial</fullName>
        <shortName evidence="6 7">TcMCU</shortName>
    </recommendedName>
</protein>